<reference key="1">
    <citation type="journal article" date="2003" name="Genome Res.">
        <title>Comparative genome analysis of Vibrio vulnificus, a marine pathogen.</title>
        <authorList>
            <person name="Chen C.-Y."/>
            <person name="Wu K.-M."/>
            <person name="Chang Y.-C."/>
            <person name="Chang C.-H."/>
            <person name="Tsai H.-C."/>
            <person name="Liao T.-L."/>
            <person name="Liu Y.-M."/>
            <person name="Chen H.-J."/>
            <person name="Shen A.B.-T."/>
            <person name="Li J.-C."/>
            <person name="Su T.-L."/>
            <person name="Shao C.-P."/>
            <person name="Lee C.-T."/>
            <person name="Hor L.-I."/>
            <person name="Tsai S.-F."/>
        </authorList>
    </citation>
    <scope>NUCLEOTIDE SEQUENCE [LARGE SCALE GENOMIC DNA]</scope>
    <source>
        <strain>YJ016</strain>
    </source>
</reference>
<keyword id="KW-0235">DNA replication</keyword>
<keyword id="KW-0238">DNA-binding</keyword>
<keyword id="KW-0639">Primosome</keyword>
<organism>
    <name type="scientific">Vibrio vulnificus (strain YJ016)</name>
    <dbReference type="NCBI Taxonomy" id="196600"/>
    <lineage>
        <taxon>Bacteria</taxon>
        <taxon>Pseudomonadati</taxon>
        <taxon>Pseudomonadota</taxon>
        <taxon>Gammaproteobacteria</taxon>
        <taxon>Vibrionales</taxon>
        <taxon>Vibrionaceae</taxon>
        <taxon>Vibrio</taxon>
    </lineage>
</organism>
<dbReference type="EMBL" id="BA000037">
    <property type="protein sequence ID" value="BAC95747.1"/>
    <property type="molecule type" value="Genomic_DNA"/>
</dbReference>
<dbReference type="RefSeq" id="WP_011079363.1">
    <property type="nucleotide sequence ID" value="NC_005139.1"/>
</dbReference>
<dbReference type="SMR" id="Q7MH89"/>
<dbReference type="STRING" id="672.VV93_v1c27120"/>
<dbReference type="KEGG" id="vvy:VV2983"/>
<dbReference type="eggNOG" id="COG2965">
    <property type="taxonomic scope" value="Bacteria"/>
</dbReference>
<dbReference type="HOGENOM" id="CLU_166075_0_0_6"/>
<dbReference type="Proteomes" id="UP000002675">
    <property type="component" value="Chromosome I"/>
</dbReference>
<dbReference type="GO" id="GO:1990077">
    <property type="term" value="C:primosome complex"/>
    <property type="evidence" value="ECO:0007669"/>
    <property type="project" value="UniProtKB-KW"/>
</dbReference>
<dbReference type="GO" id="GO:0003697">
    <property type="term" value="F:single-stranded DNA binding"/>
    <property type="evidence" value="ECO:0007669"/>
    <property type="project" value="UniProtKB-UniRule"/>
</dbReference>
<dbReference type="GO" id="GO:0006269">
    <property type="term" value="P:DNA replication, synthesis of primer"/>
    <property type="evidence" value="ECO:0007669"/>
    <property type="project" value="UniProtKB-KW"/>
</dbReference>
<dbReference type="Gene3D" id="2.40.50.140">
    <property type="entry name" value="Nucleic acid-binding proteins"/>
    <property type="match status" value="1"/>
</dbReference>
<dbReference type="HAMAP" id="MF_00720">
    <property type="entry name" value="PriB"/>
    <property type="match status" value="1"/>
</dbReference>
<dbReference type="InterPro" id="IPR012340">
    <property type="entry name" value="NA-bd_OB-fold"/>
</dbReference>
<dbReference type="InterPro" id="IPR000424">
    <property type="entry name" value="Primosome_PriB/ssb"/>
</dbReference>
<dbReference type="InterPro" id="IPR023646">
    <property type="entry name" value="Prisomal_replication_PriB"/>
</dbReference>
<dbReference type="NCBIfam" id="TIGR04418">
    <property type="entry name" value="PriB_gamma"/>
    <property type="match status" value="1"/>
</dbReference>
<dbReference type="Pfam" id="PF22657">
    <property type="entry name" value="SSB_1"/>
    <property type="match status" value="1"/>
</dbReference>
<dbReference type="PIRSF" id="PIRSF003135">
    <property type="entry name" value="Primosomal_n"/>
    <property type="match status" value="1"/>
</dbReference>
<dbReference type="SUPFAM" id="SSF50249">
    <property type="entry name" value="Nucleic acid-binding proteins"/>
    <property type="match status" value="1"/>
</dbReference>
<dbReference type="PROSITE" id="PS50935">
    <property type="entry name" value="SSB"/>
    <property type="match status" value="1"/>
</dbReference>
<gene>
    <name evidence="1" type="primary">priB</name>
    <name type="ordered locus">VV2983</name>
</gene>
<sequence>MTNRMELSGTVVKDPIRSQSPAGISHCRFWLEHRSVVVEADLPRQVFCRMPVVVSGKGSQDITQQIVLGSNIKVSGFVAYQTGRNGVGKLVLHADDIIHI</sequence>
<comment type="function">
    <text evidence="1">Involved in the restart of stalled replication forks, which reloads the replicative helicase on sites other than the origin of replication; the PriA-PriB pathway is the major replication restart pathway. During primosome assembly it facilitates complex formation between PriA and DnaT on DNA; stabilizes PriA on DNA. Stimulates the DNA unwinding activity of PriA helicase.</text>
</comment>
<comment type="subunit">
    <text evidence="1">Homodimer. Interacts with PriA and DnaT. Component of the replication restart primosome. Primosome assembly occurs via a 'hand-off' mechanism. PriA binds to replication forks, subsequently PriB then DnaT bind; DnaT then displaces ssDNA to generate the helicase loading substrate.</text>
</comment>
<comment type="similarity">
    <text evidence="1">Belongs to the PriB family.</text>
</comment>
<accession>Q7MH89</accession>
<proteinExistence type="inferred from homology"/>
<evidence type="ECO:0000255" key="1">
    <source>
        <dbReference type="HAMAP-Rule" id="MF_00720"/>
    </source>
</evidence>
<name>PRIB_VIBVY</name>
<feature type="chain" id="PRO_0000199067" description="Replication restart protein PriB">
    <location>
        <begin position="1"/>
        <end position="100"/>
    </location>
</feature>
<feature type="domain" description="SSB" evidence="1">
    <location>
        <begin position="1"/>
        <end position="100"/>
    </location>
</feature>
<protein>
    <recommendedName>
        <fullName evidence="1">Replication restart protein PriB</fullName>
    </recommendedName>
</protein>